<organism>
    <name type="scientific">Arabidopsis thaliana</name>
    <name type="common">Mouse-ear cress</name>
    <dbReference type="NCBI Taxonomy" id="3702"/>
    <lineage>
        <taxon>Eukaryota</taxon>
        <taxon>Viridiplantae</taxon>
        <taxon>Streptophyta</taxon>
        <taxon>Embryophyta</taxon>
        <taxon>Tracheophyta</taxon>
        <taxon>Spermatophyta</taxon>
        <taxon>Magnoliopsida</taxon>
        <taxon>eudicotyledons</taxon>
        <taxon>Gunneridae</taxon>
        <taxon>Pentapetalae</taxon>
        <taxon>rosids</taxon>
        <taxon>malvids</taxon>
        <taxon>Brassicales</taxon>
        <taxon>Brassicaceae</taxon>
        <taxon>Camelineae</taxon>
        <taxon>Arabidopsis</taxon>
    </lineage>
</organism>
<name>FH4_ARATH</name>
<sequence length="763" mass="84066">MAAMLMQPWPPFLPHLTLVFLTLILFFPNQSFSQSDSPRNIETFFPNDTITPPVQSPVLSPPQNPSSSSSDSDRGNILRAVLITAASTLLVAAVFFFLVHKCRRRRNRVGGVDNTLQPPVPPLAEAALAREGFTRFGGNVKGLILDENGLDVLYWRKLQQSQRDNKGGSFRKEIIHGDDEEKNVIYSKSKKKSGPVTETPLLRGRSSTSHSVIHNDNYRNATTTHPPHVKTDSFEFVKPDPTPPPPPPPPIPVKQSATPPPPPPPKLKNNGPSPPPPPPLKKTAALSSSASKKPPPAPRGSSSGESSNGQVKLKPLHWDKVNPDSDHSMVWDKIDRGSFSFDGDLMEALFGYVAVGKKSPDDGGDKKPSSASPAQIFILDPRKSQNTAIVLKSLGMTRDELVESLMEGHDFHPDTLERLSRIAPTKEEQSAILQFDGDTKMLADAESFLFHLLKAVPCAFTRLNALLFRANYYPEISNHNKNLQTLDLACTELRSRGLFVKLLEAILKSGNRMNAGTARGDAQAFNLTALLKLSDVKSVDGKTTLLNFVVEEVVRSEGKRCVLNRRTNRSFSRSSSSSISEVISKEEQEKEYLRLGLPVVGGLSSEFTNVKKAAAVDYDTVAATCLALTSRAKDARRVLAQSEGDNKEGVRFVKKMNEFLDSVEEEVKLAKEEEKKVLELVKRTTEYYQAGAVKGKNPLHLFVIVRDFLAMVDKVCVEIARNLQRRSSMGSTQQRNAVKFPVLPPNFMSDRSRSDSGGSDSDM</sequence>
<keyword id="KW-1003">Cell membrane</keyword>
<keyword id="KW-0472">Membrane</keyword>
<keyword id="KW-1185">Reference proteome</keyword>
<keyword id="KW-0732">Signal</keyword>
<keyword id="KW-0812">Transmembrane</keyword>
<keyword id="KW-1133">Transmembrane helix</keyword>
<gene>
    <name type="primary">FH4</name>
    <name type="ordered locus">At1g24150</name>
    <name type="ORF">F3I6.8</name>
</gene>
<proteinExistence type="evidence at protein level"/>
<evidence type="ECO:0000255" key="1"/>
<evidence type="ECO:0000255" key="2">
    <source>
        <dbReference type="PROSITE-ProRule" id="PRU00774"/>
    </source>
</evidence>
<evidence type="ECO:0000256" key="3">
    <source>
        <dbReference type="SAM" id="MobiDB-lite"/>
    </source>
</evidence>
<evidence type="ECO:0000269" key="4">
    <source>
    </source>
</evidence>
<evidence type="ECO:0000305" key="5"/>
<accession>O48682</accession>
<accession>F4I956</accession>
<comment type="function">
    <text evidence="4">Might be involved in the organization and polarity of the actin cytoskeleton.</text>
</comment>
<comment type="subunit">
    <text evidence="4">Interacts with profilin.</text>
</comment>
<comment type="subcellular location">
    <subcellularLocation>
        <location evidence="4">Cell membrane</location>
        <topology evidence="4">Single-pass membrane protein</topology>
    </subcellularLocation>
</comment>
<comment type="tissue specificity">
    <text evidence="4">Expressed in the whole plant (at protein level).</text>
</comment>
<comment type="similarity">
    <text evidence="5">Belongs to the formin-like family. Class-I subfamily.</text>
</comment>
<comment type="sequence caution" evidence="5">
    <conflict type="erroneous gene model prediction">
        <sequence resource="EMBL-CDS" id="AAC00575"/>
    </conflict>
</comment>
<comment type="sequence caution" evidence="5">
    <conflict type="frameshift">
        <sequence resource="EMBL-CDS" id="AAC00575"/>
    </conflict>
</comment>
<dbReference type="EMBL" id="AC002396">
    <property type="protein sequence ID" value="AAC00575.1"/>
    <property type="status" value="ALT_SEQ"/>
    <property type="molecule type" value="Genomic_DNA"/>
</dbReference>
<dbReference type="EMBL" id="CP002684">
    <property type="protein sequence ID" value="AEE30487.2"/>
    <property type="molecule type" value="Genomic_DNA"/>
</dbReference>
<dbReference type="PIR" id="T00645">
    <property type="entry name" value="T00645"/>
</dbReference>
<dbReference type="RefSeq" id="NP_001319073.1">
    <property type="nucleotide sequence ID" value="NM_001332639.1"/>
</dbReference>
<dbReference type="SMR" id="O48682"/>
<dbReference type="BioGRID" id="24266">
    <property type="interactions" value="2"/>
</dbReference>
<dbReference type="STRING" id="3702.O48682"/>
<dbReference type="GlyGen" id="O48682">
    <property type="glycosylation" value="2 sites"/>
</dbReference>
<dbReference type="PaxDb" id="3702-AT1G24150.1"/>
<dbReference type="ProteomicsDB" id="230512"/>
<dbReference type="GeneID" id="839028"/>
<dbReference type="KEGG" id="ath:AT1G24150"/>
<dbReference type="Araport" id="AT1G24150"/>
<dbReference type="TAIR" id="AT1G24150">
    <property type="gene designation" value="FH4"/>
</dbReference>
<dbReference type="eggNOG" id="KOG1922">
    <property type="taxonomic scope" value="Eukaryota"/>
</dbReference>
<dbReference type="InParanoid" id="O48682"/>
<dbReference type="PhylomeDB" id="O48682"/>
<dbReference type="PRO" id="PR:O48682"/>
<dbReference type="Proteomes" id="UP000006548">
    <property type="component" value="Chromosome 1"/>
</dbReference>
<dbReference type="ExpressionAtlas" id="O48682">
    <property type="expression patterns" value="baseline and differential"/>
</dbReference>
<dbReference type="GO" id="GO:0005856">
    <property type="term" value="C:cytoskeleton"/>
    <property type="evidence" value="ECO:0000318"/>
    <property type="project" value="GO_Central"/>
</dbReference>
<dbReference type="GO" id="GO:0005886">
    <property type="term" value="C:plasma membrane"/>
    <property type="evidence" value="ECO:0007669"/>
    <property type="project" value="UniProtKB-SubCell"/>
</dbReference>
<dbReference type="GO" id="GO:0051015">
    <property type="term" value="F:actin filament binding"/>
    <property type="evidence" value="ECO:0000318"/>
    <property type="project" value="GO_Central"/>
</dbReference>
<dbReference type="GO" id="GO:0030036">
    <property type="term" value="P:actin cytoskeleton organization"/>
    <property type="evidence" value="ECO:0000318"/>
    <property type="project" value="GO_Central"/>
</dbReference>
<dbReference type="GO" id="GO:0045010">
    <property type="term" value="P:actin nucleation"/>
    <property type="evidence" value="ECO:0007669"/>
    <property type="project" value="InterPro"/>
</dbReference>
<dbReference type="Gene3D" id="1.20.58.2220">
    <property type="entry name" value="Formin, FH2 domain"/>
    <property type="match status" value="1"/>
</dbReference>
<dbReference type="InterPro" id="IPR015425">
    <property type="entry name" value="FH2_Formin"/>
</dbReference>
<dbReference type="InterPro" id="IPR042201">
    <property type="entry name" value="FH2_Formin_sf"/>
</dbReference>
<dbReference type="InterPro" id="IPR027643">
    <property type="entry name" value="Formin-like_plant"/>
</dbReference>
<dbReference type="PANTHER" id="PTHR23213:SF354">
    <property type="entry name" value="FORMIN-LIKE PROTEIN 4"/>
    <property type="match status" value="1"/>
</dbReference>
<dbReference type="PANTHER" id="PTHR23213">
    <property type="entry name" value="FORMIN-RELATED"/>
    <property type="match status" value="1"/>
</dbReference>
<dbReference type="Pfam" id="PF02181">
    <property type="entry name" value="FH2"/>
    <property type="match status" value="1"/>
</dbReference>
<dbReference type="SMART" id="SM00498">
    <property type="entry name" value="FH2"/>
    <property type="match status" value="1"/>
</dbReference>
<dbReference type="SUPFAM" id="SSF101447">
    <property type="entry name" value="Formin homology 2 domain (FH2 domain)"/>
    <property type="match status" value="1"/>
</dbReference>
<dbReference type="PROSITE" id="PS51444">
    <property type="entry name" value="FH2"/>
    <property type="match status" value="1"/>
</dbReference>
<reference key="1">
    <citation type="journal article" date="2000" name="Nature">
        <title>Sequence and analysis of chromosome 1 of the plant Arabidopsis thaliana.</title>
        <authorList>
            <person name="Theologis A."/>
            <person name="Ecker J.R."/>
            <person name="Palm C.J."/>
            <person name="Federspiel N.A."/>
            <person name="Kaul S."/>
            <person name="White O."/>
            <person name="Alonso J."/>
            <person name="Altafi H."/>
            <person name="Araujo R."/>
            <person name="Bowman C.L."/>
            <person name="Brooks S.Y."/>
            <person name="Buehler E."/>
            <person name="Chan A."/>
            <person name="Chao Q."/>
            <person name="Chen H."/>
            <person name="Cheuk R.F."/>
            <person name="Chin C.W."/>
            <person name="Chung M.K."/>
            <person name="Conn L."/>
            <person name="Conway A.B."/>
            <person name="Conway A.R."/>
            <person name="Creasy T.H."/>
            <person name="Dewar K."/>
            <person name="Dunn P."/>
            <person name="Etgu P."/>
            <person name="Feldblyum T.V."/>
            <person name="Feng J.-D."/>
            <person name="Fong B."/>
            <person name="Fujii C.Y."/>
            <person name="Gill J.E."/>
            <person name="Goldsmith A.D."/>
            <person name="Haas B."/>
            <person name="Hansen N.F."/>
            <person name="Hughes B."/>
            <person name="Huizar L."/>
            <person name="Hunter J.L."/>
            <person name="Jenkins J."/>
            <person name="Johnson-Hopson C."/>
            <person name="Khan S."/>
            <person name="Khaykin E."/>
            <person name="Kim C.J."/>
            <person name="Koo H.L."/>
            <person name="Kremenetskaia I."/>
            <person name="Kurtz D.B."/>
            <person name="Kwan A."/>
            <person name="Lam B."/>
            <person name="Langin-Hooper S."/>
            <person name="Lee A."/>
            <person name="Lee J.M."/>
            <person name="Lenz C.A."/>
            <person name="Li J.H."/>
            <person name="Li Y.-P."/>
            <person name="Lin X."/>
            <person name="Liu S.X."/>
            <person name="Liu Z.A."/>
            <person name="Luros J.S."/>
            <person name="Maiti R."/>
            <person name="Marziali A."/>
            <person name="Militscher J."/>
            <person name="Miranda M."/>
            <person name="Nguyen M."/>
            <person name="Nierman W.C."/>
            <person name="Osborne B.I."/>
            <person name="Pai G."/>
            <person name="Peterson J."/>
            <person name="Pham P.K."/>
            <person name="Rizzo M."/>
            <person name="Rooney T."/>
            <person name="Rowley D."/>
            <person name="Sakano H."/>
            <person name="Salzberg S.L."/>
            <person name="Schwartz J.R."/>
            <person name="Shinn P."/>
            <person name="Southwick A.M."/>
            <person name="Sun H."/>
            <person name="Tallon L.J."/>
            <person name="Tambunga G."/>
            <person name="Toriumi M.J."/>
            <person name="Town C.D."/>
            <person name="Utterback T."/>
            <person name="Van Aken S."/>
            <person name="Vaysberg M."/>
            <person name="Vysotskaia V.S."/>
            <person name="Walker M."/>
            <person name="Wu D."/>
            <person name="Yu G."/>
            <person name="Fraser C.M."/>
            <person name="Venter J.C."/>
            <person name="Davis R.W."/>
        </authorList>
    </citation>
    <scope>NUCLEOTIDE SEQUENCE [LARGE SCALE GENOMIC DNA]</scope>
    <source>
        <strain>cv. Columbia</strain>
    </source>
</reference>
<reference key="2">
    <citation type="journal article" date="2017" name="Plant J.">
        <title>Araport11: a complete reannotation of the Arabidopsis thaliana reference genome.</title>
        <authorList>
            <person name="Cheng C.Y."/>
            <person name="Krishnakumar V."/>
            <person name="Chan A.P."/>
            <person name="Thibaud-Nissen F."/>
            <person name="Schobel S."/>
            <person name="Town C.D."/>
        </authorList>
    </citation>
    <scope>GENOME REANNOTATION</scope>
    <source>
        <strain>cv. Columbia</strain>
    </source>
</reference>
<reference key="3">
    <citation type="journal article" date="2000" name="Genome Biol.">
        <title>Are plant formins integral membrane proteins?</title>
        <authorList>
            <person name="Cvrckova F."/>
        </authorList>
    </citation>
    <scope>GENE FAMILY ORGANIZATION</scope>
</reference>
<reference key="4">
    <citation type="journal article" date="2002" name="Trends Plant Sci.">
        <title>Formins: intermediates in signal-transduction cascades that affect cytoskeletal reorganization.</title>
        <authorList>
            <person name="Deeks M.J."/>
            <person name="Hussey P.J."/>
            <person name="Davies B."/>
        </authorList>
    </citation>
    <scope>GENE FAMILY ORGANIZATION</scope>
    <scope>NOMENCLATURE</scope>
</reference>
<reference key="5">
    <citation type="journal article" date="2004" name="BMC Genomics">
        <title>Formin homology 2 domains occur in multiple contexts in angiosperms.</title>
        <authorList>
            <person name="Cvrckova F."/>
            <person name="Novotny M."/>
            <person name="Pickova D."/>
            <person name="Zarsky V."/>
        </authorList>
    </citation>
    <scope>GENE FAMILY ORGANIZATION</scope>
    <scope>NOMENCLATURE</scope>
</reference>
<reference key="6">
    <citation type="journal article" date="2005" name="New Phytol.">
        <title>Arabidopsis group Ie formins localize to specific cell membrane domains, interact with actin-binding proteins and cause defects in cell expansion upon aberrant expression.</title>
        <authorList>
            <person name="Deeks M.J."/>
            <person name="Cvrckova F."/>
            <person name="Machesky L.M."/>
            <person name="Mikitova V."/>
            <person name="Ketelaar T."/>
            <person name="Zarsky V."/>
            <person name="Davies B."/>
            <person name="Hussey P.J."/>
        </authorList>
    </citation>
    <scope>FUNCTION</scope>
    <scope>SUBCELLULAR LOCATION</scope>
    <scope>TISSUE SPECIFICITY</scope>
    <scope>SUBUNIT</scope>
</reference>
<feature type="signal peptide" evidence="1">
    <location>
        <begin position="1"/>
        <end position="33"/>
    </location>
</feature>
<feature type="chain" id="PRO_0000308529" description="Formin-like protein 4">
    <location>
        <begin position="34"/>
        <end position="763"/>
    </location>
</feature>
<feature type="transmembrane region" description="Helical" evidence="1">
    <location>
        <begin position="80"/>
        <end position="100"/>
    </location>
</feature>
<feature type="domain" description="FH2" evidence="2">
    <location>
        <begin position="303"/>
        <end position="738"/>
    </location>
</feature>
<feature type="region of interest" description="Disordered" evidence="3">
    <location>
        <begin position="52"/>
        <end position="73"/>
    </location>
</feature>
<feature type="region of interest" description="Disordered" evidence="3">
    <location>
        <begin position="185"/>
        <end position="327"/>
    </location>
</feature>
<feature type="region of interest" description="Disordered" evidence="3">
    <location>
        <begin position="726"/>
        <end position="763"/>
    </location>
</feature>
<feature type="compositionally biased region" description="Polar residues" evidence="3">
    <location>
        <begin position="205"/>
        <end position="225"/>
    </location>
</feature>
<feature type="compositionally biased region" description="Basic and acidic residues" evidence="3">
    <location>
        <begin position="229"/>
        <end position="238"/>
    </location>
</feature>
<feature type="compositionally biased region" description="Pro residues" evidence="3">
    <location>
        <begin position="240"/>
        <end position="280"/>
    </location>
</feature>
<feature type="compositionally biased region" description="Low complexity" evidence="3">
    <location>
        <begin position="281"/>
        <end position="292"/>
    </location>
</feature>
<feature type="compositionally biased region" description="Basic and acidic residues" evidence="3">
    <location>
        <begin position="316"/>
        <end position="327"/>
    </location>
</feature>
<feature type="compositionally biased region" description="Polar residues" evidence="3">
    <location>
        <begin position="726"/>
        <end position="736"/>
    </location>
</feature>
<protein>
    <recommendedName>
        <fullName>Formin-like protein 4</fullName>
        <shortName>AtFH4</shortName>
        <shortName>AtFORMIN-4</shortName>
    </recommendedName>
</protein>